<comment type="function">
    <text evidence="2">A cytochrome P450 monooxygenase that catalyzes the side-chain hydroxylation and cleavage of cholesterol to pregnenolone, the precursor of most steroid hormones. Catalyzes three sequential oxidation reactions of cholesterol, namely the hydroxylation at C22 followed with the hydroxylation at C20 to yield 20R,22R-hydroxycholesterol that is further cleaved between C20 and C22 to yield the C21-steroid pregnenolone and 4-methylpentanal. Mechanistically, uses molecular oxygen inserting one oxygen atom into a substrate and reducing the second into a water molecule. Two electrons are provided by NADPH via a two-protein mitochondrial transfer system comprising flavoprotein FDXR (adrenodoxin/ferredoxin reductase) and nonheme iron-sulfur protein FDX1 or FDX2 (adrenodoxin/ferredoxin).</text>
</comment>
<comment type="catalytic activity">
    <reaction evidence="2">
        <text>6 reduced [adrenodoxin] + cholesterol + 3 O2 + 6 H(+) = 4-methylpentanal + pregnenolone + 6 oxidized [adrenodoxin] + 4 H2O</text>
        <dbReference type="Rhea" id="RHEA:35739"/>
        <dbReference type="Rhea" id="RHEA-COMP:9998"/>
        <dbReference type="Rhea" id="RHEA-COMP:9999"/>
        <dbReference type="ChEBI" id="CHEBI:15377"/>
        <dbReference type="ChEBI" id="CHEBI:15378"/>
        <dbReference type="ChEBI" id="CHEBI:15379"/>
        <dbReference type="ChEBI" id="CHEBI:16113"/>
        <dbReference type="ChEBI" id="CHEBI:16581"/>
        <dbReference type="ChEBI" id="CHEBI:17998"/>
        <dbReference type="ChEBI" id="CHEBI:33737"/>
        <dbReference type="ChEBI" id="CHEBI:33738"/>
        <dbReference type="EC" id="1.14.15.6"/>
    </reaction>
    <physiologicalReaction direction="left-to-right" evidence="2">
        <dbReference type="Rhea" id="RHEA:35740"/>
    </physiologicalReaction>
</comment>
<comment type="catalytic activity">
    <reaction evidence="2">
        <text>2 reduced [adrenodoxin] + cholesterol + O2 + 2 H(+) = (22R)-hydroxycholesterol + 2 oxidized [adrenodoxin] + H2O</text>
        <dbReference type="Rhea" id="RHEA:34335"/>
        <dbReference type="Rhea" id="RHEA-COMP:9998"/>
        <dbReference type="Rhea" id="RHEA-COMP:9999"/>
        <dbReference type="ChEBI" id="CHEBI:15377"/>
        <dbReference type="ChEBI" id="CHEBI:15378"/>
        <dbReference type="ChEBI" id="CHEBI:15379"/>
        <dbReference type="ChEBI" id="CHEBI:16113"/>
        <dbReference type="ChEBI" id="CHEBI:33737"/>
        <dbReference type="ChEBI" id="CHEBI:33738"/>
        <dbReference type="ChEBI" id="CHEBI:67237"/>
    </reaction>
    <physiologicalReaction direction="left-to-right" evidence="2">
        <dbReference type="Rhea" id="RHEA:34336"/>
    </physiologicalReaction>
</comment>
<comment type="catalytic activity">
    <reaction evidence="2">
        <text>(22R)-hydroxycholesterol + 2 reduced [adrenodoxin] + O2 + 2 H(+) = (20R,22R)-20,22-dihydroxycholesterol + 2 oxidized [adrenodoxin] + H2O</text>
        <dbReference type="Rhea" id="RHEA:34339"/>
        <dbReference type="Rhea" id="RHEA-COMP:9998"/>
        <dbReference type="Rhea" id="RHEA-COMP:9999"/>
        <dbReference type="ChEBI" id="CHEBI:1294"/>
        <dbReference type="ChEBI" id="CHEBI:15377"/>
        <dbReference type="ChEBI" id="CHEBI:15378"/>
        <dbReference type="ChEBI" id="CHEBI:15379"/>
        <dbReference type="ChEBI" id="CHEBI:33737"/>
        <dbReference type="ChEBI" id="CHEBI:33738"/>
        <dbReference type="ChEBI" id="CHEBI:67237"/>
    </reaction>
    <physiologicalReaction direction="left-to-right" evidence="2">
        <dbReference type="Rhea" id="RHEA:34340"/>
    </physiologicalReaction>
</comment>
<comment type="catalytic activity">
    <reaction evidence="2">
        <text>(20R,22R)-20,22-dihydroxycholesterol + 2 reduced [adrenodoxin] + O2 + 2 H(+) = 4-methylpentanal + pregnenolone + 2 oxidized [adrenodoxin] + 2 H2O</text>
        <dbReference type="Rhea" id="RHEA:34343"/>
        <dbReference type="Rhea" id="RHEA-COMP:9998"/>
        <dbReference type="Rhea" id="RHEA-COMP:9999"/>
        <dbReference type="ChEBI" id="CHEBI:1294"/>
        <dbReference type="ChEBI" id="CHEBI:15377"/>
        <dbReference type="ChEBI" id="CHEBI:15378"/>
        <dbReference type="ChEBI" id="CHEBI:15379"/>
        <dbReference type="ChEBI" id="CHEBI:16581"/>
        <dbReference type="ChEBI" id="CHEBI:17998"/>
        <dbReference type="ChEBI" id="CHEBI:33737"/>
        <dbReference type="ChEBI" id="CHEBI:33738"/>
    </reaction>
    <physiologicalReaction direction="left-to-right" evidence="2">
        <dbReference type="Rhea" id="RHEA:34344"/>
    </physiologicalReaction>
</comment>
<comment type="cofactor">
    <cofactor evidence="2">
        <name>heme</name>
        <dbReference type="ChEBI" id="CHEBI:30413"/>
    </cofactor>
</comment>
<comment type="pathway">
    <text evidence="2">Lipid metabolism; C21-steroid hormone metabolism.</text>
</comment>
<comment type="pathway">
    <text evidence="2">Steroid metabolism; cholesterol metabolism.</text>
</comment>
<comment type="subunit">
    <text evidence="2">Interacts with FDX1/adrenodoxin.</text>
</comment>
<comment type="subcellular location">
    <subcellularLocation>
        <location evidence="3">Mitochondrion inner membrane</location>
        <topology evidence="6">Peripheral membrane protein</topology>
    </subcellularLocation>
    <text evidence="3">Localizes to the matrix side of the mitochondrion inner membrane.</text>
</comment>
<comment type="similarity">
    <text evidence="6">Belongs to the cytochrome P450 family.</text>
</comment>
<sequence>MLARGLPLRSALVKACPPLLNTGREGWGHHRVGTGEGAGISTRTPRPYSEIPSPGDNGWINLYHFWRKKSSQRIHFRHIENFQKYGPIYREKLGNLESVYIIHPEDVAHLFKFEGSYPQRYDIPPWLAYHQYYQKPIGVLFKKSGAWKKDRVVLNTEVMAPEAIKNFIPLLNPVSQDFVSLLRKRIQQQGSGKFAGDIKEDLFHFAFESITNVMFGERLGMLEDTVNTEAQKFIDAVYKMFHTSVPLLNLPPELYRLFRTKTWRDHVAAWDTIFNKAEKYTEIFYQDLRQKTEFRNYPGILYHLLKSEKMLLEDVKANITEMLAGGVDTTSMTLQWHLYEMARSLNVQEMLREEVLNARRQAEGDISKMLQMVPLLKASIKETLRLHPISVTLQRYPESDLVLQDYLIPAKTLVQVAIYAMGRDPAFFSNPDKFDPTRWLGKDKDLIHFRNLGFGWGVRQCVGRRIAELEMTLFLIHILENFKIEMQQIGDVNTIFNLILTPDKPIFLVFRPFNQDPPQA</sequence>
<reference key="1">
    <citation type="journal article" date="1996" name="J. Steroid Biochem. Mol. Biol.">
        <title>Molecular cloning and nucleotide sequences of cDNA clones of sheep and goat adrenocortical cytochromes P450scc (CYP11A1).</title>
        <authorList>
            <person name="Okuyama E."/>
            <person name="Okazaki T."/>
            <person name="Furukawa A."/>
            <person name="Wu R.-F."/>
            <person name="Ichikawa Y."/>
        </authorList>
    </citation>
    <scope>NUCLEOTIDE SEQUENCE [MRNA]</scope>
    <source>
        <tissue>Adrenal cortex</tissue>
    </source>
</reference>
<evidence type="ECO:0000250" key="1">
    <source>
        <dbReference type="UniProtKB" id="P00189"/>
    </source>
</evidence>
<evidence type="ECO:0000250" key="2">
    <source>
        <dbReference type="UniProtKB" id="P05108"/>
    </source>
</evidence>
<evidence type="ECO:0000250" key="3">
    <source>
        <dbReference type="UniProtKB" id="P14137"/>
    </source>
</evidence>
<evidence type="ECO:0000256" key="4">
    <source>
        <dbReference type="SAM" id="MobiDB-lite"/>
    </source>
</evidence>
<evidence type="ECO:0000303" key="5">
    <source>
    </source>
</evidence>
<evidence type="ECO:0000305" key="6"/>
<proteinExistence type="evidence at transcript level"/>
<keyword id="KW-0153">Cholesterol metabolism</keyword>
<keyword id="KW-0349">Heme</keyword>
<keyword id="KW-0408">Iron</keyword>
<keyword id="KW-0443">Lipid metabolism</keyword>
<keyword id="KW-0472">Membrane</keyword>
<keyword id="KW-0479">Metal-binding</keyword>
<keyword id="KW-0496">Mitochondrion</keyword>
<keyword id="KW-0999">Mitochondrion inner membrane</keyword>
<keyword id="KW-0503">Monooxygenase</keyword>
<keyword id="KW-0560">Oxidoreductase</keyword>
<keyword id="KW-1185">Reference proteome</keyword>
<keyword id="KW-0753">Steroid metabolism</keyword>
<keyword id="KW-0755">Steroidogenesis</keyword>
<keyword id="KW-1207">Sterol metabolism</keyword>
<keyword id="KW-0809">Transit peptide</keyword>
<organism>
    <name type="scientific">Capra hircus</name>
    <name type="common">Goat</name>
    <dbReference type="NCBI Taxonomy" id="9925"/>
    <lineage>
        <taxon>Eukaryota</taxon>
        <taxon>Metazoa</taxon>
        <taxon>Chordata</taxon>
        <taxon>Craniata</taxon>
        <taxon>Vertebrata</taxon>
        <taxon>Euteleostomi</taxon>
        <taxon>Mammalia</taxon>
        <taxon>Eutheria</taxon>
        <taxon>Laurasiatheria</taxon>
        <taxon>Artiodactyla</taxon>
        <taxon>Ruminantia</taxon>
        <taxon>Pecora</taxon>
        <taxon>Bovidae</taxon>
        <taxon>Caprinae</taxon>
        <taxon>Capra</taxon>
    </lineage>
</organism>
<name>CP11A_CAPHI</name>
<accession>P79153</accession>
<dbReference type="EC" id="1.14.15.6" evidence="2"/>
<dbReference type="EMBL" id="D50058">
    <property type="protein sequence ID" value="BAA08776.1"/>
    <property type="molecule type" value="mRNA"/>
</dbReference>
<dbReference type="RefSeq" id="NP_001274503.1">
    <property type="nucleotide sequence ID" value="NM_001287574.1"/>
</dbReference>
<dbReference type="SMR" id="P79153"/>
<dbReference type="STRING" id="9925.ENSCHIP00000025336"/>
<dbReference type="Ensembl" id="ENSCHIT00000033198.1">
    <property type="protein sequence ID" value="ENSCHIP00000025336.1"/>
    <property type="gene ID" value="ENSCHIG00000022151.1"/>
</dbReference>
<dbReference type="GeneID" id="102173131"/>
<dbReference type="KEGG" id="chx:102173131"/>
<dbReference type="CTD" id="1583"/>
<dbReference type="VGNC" id="VGNC:103462">
    <property type="gene designation" value="CYP11A1"/>
</dbReference>
<dbReference type="GeneTree" id="ENSGT00940000158575"/>
<dbReference type="OrthoDB" id="3945418at2759"/>
<dbReference type="UniPathway" id="UPA00229"/>
<dbReference type="UniPathway" id="UPA00296"/>
<dbReference type="Proteomes" id="UP000291000">
    <property type="component" value="Chromosome 21"/>
</dbReference>
<dbReference type="Proteomes" id="UP000694566">
    <property type="component" value="Unplaced"/>
</dbReference>
<dbReference type="Bgee" id="ENSCHIG00000022151">
    <property type="expression patterns" value="Expressed in adrenal gland and 11 other cell types or tissues"/>
</dbReference>
<dbReference type="GO" id="GO:0005743">
    <property type="term" value="C:mitochondrial inner membrane"/>
    <property type="evidence" value="ECO:0000250"/>
    <property type="project" value="UniProtKB"/>
</dbReference>
<dbReference type="GO" id="GO:0008386">
    <property type="term" value="F:cholesterol monooxygenase (side-chain-cleaving) activity"/>
    <property type="evidence" value="ECO:0000250"/>
    <property type="project" value="UniProtKB"/>
</dbReference>
<dbReference type="GO" id="GO:0020037">
    <property type="term" value="F:heme binding"/>
    <property type="evidence" value="ECO:0000250"/>
    <property type="project" value="UniProtKB"/>
</dbReference>
<dbReference type="GO" id="GO:0005506">
    <property type="term" value="F:iron ion binding"/>
    <property type="evidence" value="ECO:0007669"/>
    <property type="project" value="InterPro"/>
</dbReference>
<dbReference type="GO" id="GO:0006700">
    <property type="term" value="P:C21-steroid hormone biosynthetic process"/>
    <property type="evidence" value="ECO:0000250"/>
    <property type="project" value="UniProtKB"/>
</dbReference>
<dbReference type="GO" id="GO:0071375">
    <property type="term" value="P:cellular response to peptide hormone stimulus"/>
    <property type="evidence" value="ECO:0007669"/>
    <property type="project" value="TreeGrafter"/>
</dbReference>
<dbReference type="GO" id="GO:0008203">
    <property type="term" value="P:cholesterol metabolic process"/>
    <property type="evidence" value="ECO:0000250"/>
    <property type="project" value="UniProtKB"/>
</dbReference>
<dbReference type="GO" id="GO:0034650">
    <property type="term" value="P:cortisol metabolic process"/>
    <property type="evidence" value="ECO:0007669"/>
    <property type="project" value="TreeGrafter"/>
</dbReference>
<dbReference type="GO" id="GO:0006704">
    <property type="term" value="P:glucocorticoid biosynthetic process"/>
    <property type="evidence" value="ECO:0007669"/>
    <property type="project" value="TreeGrafter"/>
</dbReference>
<dbReference type="FunFam" id="1.10.630.10:FF:000015">
    <property type="entry name" value="Cholesterol side-chain cleavage enzyme, mitochondrial"/>
    <property type="match status" value="1"/>
</dbReference>
<dbReference type="Gene3D" id="1.10.630.10">
    <property type="entry name" value="Cytochrome P450"/>
    <property type="match status" value="1"/>
</dbReference>
<dbReference type="InterPro" id="IPR050479">
    <property type="entry name" value="CYP11_CYP27_families"/>
</dbReference>
<dbReference type="InterPro" id="IPR001128">
    <property type="entry name" value="Cyt_P450"/>
</dbReference>
<dbReference type="InterPro" id="IPR017972">
    <property type="entry name" value="Cyt_P450_CS"/>
</dbReference>
<dbReference type="InterPro" id="IPR002401">
    <property type="entry name" value="Cyt_P450_E_grp-I"/>
</dbReference>
<dbReference type="InterPro" id="IPR036396">
    <property type="entry name" value="Cyt_P450_sf"/>
</dbReference>
<dbReference type="PANTHER" id="PTHR24279:SF3">
    <property type="entry name" value="CHOLESTEROL SIDE-CHAIN CLEAVAGE ENZYME, MITOCHONDRIAL"/>
    <property type="match status" value="1"/>
</dbReference>
<dbReference type="PANTHER" id="PTHR24279">
    <property type="entry name" value="CYTOCHROME P450"/>
    <property type="match status" value="1"/>
</dbReference>
<dbReference type="Pfam" id="PF00067">
    <property type="entry name" value="p450"/>
    <property type="match status" value="1"/>
</dbReference>
<dbReference type="PRINTS" id="PR00463">
    <property type="entry name" value="EP450I"/>
</dbReference>
<dbReference type="PRINTS" id="PR00385">
    <property type="entry name" value="P450"/>
</dbReference>
<dbReference type="SUPFAM" id="SSF48264">
    <property type="entry name" value="Cytochrome P450"/>
    <property type="match status" value="1"/>
</dbReference>
<dbReference type="PROSITE" id="PS00086">
    <property type="entry name" value="CYTOCHROME_P450"/>
    <property type="match status" value="1"/>
</dbReference>
<feature type="transit peptide" description="Mitochondrion" evidence="1">
    <location>
        <begin position="1"/>
        <end position="39"/>
    </location>
</feature>
<feature type="chain" id="PRO_0000003583" description="Cholesterol side-chain cleavage enzyme, mitochondrial">
    <location>
        <begin position="40"/>
        <end position="520"/>
    </location>
</feature>
<feature type="region of interest" description="Disordered" evidence="4">
    <location>
        <begin position="27"/>
        <end position="48"/>
    </location>
</feature>
<feature type="binding site" description="axial binding residue" evidence="2">
    <location>
        <position position="461"/>
    </location>
    <ligand>
        <name>heme</name>
        <dbReference type="ChEBI" id="CHEBI:30413"/>
    </ligand>
    <ligandPart>
        <name>Fe</name>
        <dbReference type="ChEBI" id="CHEBI:18248"/>
    </ligandPart>
</feature>
<protein>
    <recommendedName>
        <fullName evidence="2">Cholesterol side-chain cleavage enzyme, mitochondrial</fullName>
        <ecNumber evidence="2">1.14.15.6</ecNumber>
    </recommendedName>
    <alternativeName>
        <fullName>CYPXIA1</fullName>
    </alternativeName>
    <alternativeName>
        <fullName>Cholesterol desmolase</fullName>
    </alternativeName>
    <alternativeName>
        <fullName>Cytochrome P450 11A1</fullName>
    </alternativeName>
    <alternativeName>
        <fullName>Cytochrome P450(scc)</fullName>
    </alternativeName>
</protein>
<gene>
    <name evidence="5" type="primary">CYP11A1</name>
</gene>